<protein>
    <recommendedName>
        <fullName evidence="1">Transcription elongation factor GreA</fullName>
    </recommendedName>
    <alternativeName>
        <fullName evidence="1">Transcript cleavage factor GreA</fullName>
    </alternativeName>
</protein>
<comment type="function">
    <text evidence="1">Necessary for efficient RNA polymerase transcription elongation past template-encoded arresting sites. The arresting sites in DNA have the property of trapping a certain fraction of elongating RNA polymerases that pass through, resulting in locked ternary complexes. Cleavage of the nascent transcript by cleavage factors such as GreA or GreB allows the resumption of elongation from the new 3'terminus. GreA releases sequences of 2 to 3 nucleotides.</text>
</comment>
<comment type="similarity">
    <text evidence="1">Belongs to the GreA/GreB family.</text>
</comment>
<keyword id="KW-0175">Coiled coil</keyword>
<keyword id="KW-0238">DNA-binding</keyword>
<keyword id="KW-0804">Transcription</keyword>
<keyword id="KW-0805">Transcription regulation</keyword>
<feature type="chain" id="PRO_1000034270" description="Transcription elongation factor GreA">
    <location>
        <begin position="1"/>
        <end position="160"/>
    </location>
</feature>
<feature type="coiled-coil region" evidence="1">
    <location>
        <begin position="50"/>
        <end position="70"/>
    </location>
</feature>
<organism>
    <name type="scientific">Legionella pneumophila (strain Corby)</name>
    <dbReference type="NCBI Taxonomy" id="400673"/>
    <lineage>
        <taxon>Bacteria</taxon>
        <taxon>Pseudomonadati</taxon>
        <taxon>Pseudomonadota</taxon>
        <taxon>Gammaproteobacteria</taxon>
        <taxon>Legionellales</taxon>
        <taxon>Legionellaceae</taxon>
        <taxon>Legionella</taxon>
    </lineage>
</organism>
<gene>
    <name evidence="1" type="primary">greA</name>
    <name type="ordered locus">LPC_0517</name>
</gene>
<name>GREA_LEGPC</name>
<reference key="1">
    <citation type="submission" date="2006-11" db="EMBL/GenBank/DDBJ databases">
        <title>Identification and characterization of a new conjugation/ type IVA secretion system (trb/tra) of L. pneumophila Corby localized on a mobile genomic island.</title>
        <authorList>
            <person name="Gloeckner G."/>
            <person name="Albert-Weissenberger C."/>
            <person name="Weinmann E."/>
            <person name="Jacobi S."/>
            <person name="Schunder E."/>
            <person name="Steinert M."/>
            <person name="Buchrieser C."/>
            <person name="Hacker J."/>
            <person name="Heuner K."/>
        </authorList>
    </citation>
    <scope>NUCLEOTIDE SEQUENCE [LARGE SCALE GENOMIC DNA]</scope>
    <source>
        <strain>Corby</strain>
    </source>
</reference>
<proteinExistence type="inferred from homology"/>
<accession>A5IAV2</accession>
<evidence type="ECO:0000255" key="1">
    <source>
        <dbReference type="HAMAP-Rule" id="MF_00105"/>
    </source>
</evidence>
<dbReference type="EMBL" id="CP000675">
    <property type="protein sequence ID" value="ABQ54502.1"/>
    <property type="molecule type" value="Genomic_DNA"/>
</dbReference>
<dbReference type="RefSeq" id="WP_011947542.1">
    <property type="nucleotide sequence ID" value="NC_009494.2"/>
</dbReference>
<dbReference type="SMR" id="A5IAV2"/>
<dbReference type="KEGG" id="lpc:LPC_0517"/>
<dbReference type="HOGENOM" id="CLU_101379_2_0_6"/>
<dbReference type="GO" id="GO:0003677">
    <property type="term" value="F:DNA binding"/>
    <property type="evidence" value="ECO:0007669"/>
    <property type="project" value="UniProtKB-UniRule"/>
</dbReference>
<dbReference type="GO" id="GO:0070063">
    <property type="term" value="F:RNA polymerase binding"/>
    <property type="evidence" value="ECO:0007669"/>
    <property type="project" value="InterPro"/>
</dbReference>
<dbReference type="GO" id="GO:0006354">
    <property type="term" value="P:DNA-templated transcription elongation"/>
    <property type="evidence" value="ECO:0007669"/>
    <property type="project" value="TreeGrafter"/>
</dbReference>
<dbReference type="GO" id="GO:0032784">
    <property type="term" value="P:regulation of DNA-templated transcription elongation"/>
    <property type="evidence" value="ECO:0007669"/>
    <property type="project" value="UniProtKB-UniRule"/>
</dbReference>
<dbReference type="FunFam" id="1.10.287.180:FF:000001">
    <property type="entry name" value="Transcription elongation factor GreA"/>
    <property type="match status" value="1"/>
</dbReference>
<dbReference type="FunFam" id="3.10.50.30:FF:000001">
    <property type="entry name" value="Transcription elongation factor GreA"/>
    <property type="match status" value="1"/>
</dbReference>
<dbReference type="Gene3D" id="3.10.50.30">
    <property type="entry name" value="Transcription elongation factor, GreA/GreB, C-terminal domain"/>
    <property type="match status" value="1"/>
</dbReference>
<dbReference type="Gene3D" id="1.10.287.180">
    <property type="entry name" value="Transcription elongation factor, GreA/GreB, N-terminal domain"/>
    <property type="match status" value="1"/>
</dbReference>
<dbReference type="HAMAP" id="MF_00105">
    <property type="entry name" value="GreA_GreB"/>
    <property type="match status" value="1"/>
</dbReference>
<dbReference type="InterPro" id="IPR036953">
    <property type="entry name" value="GreA/GreB_C_sf"/>
</dbReference>
<dbReference type="InterPro" id="IPR018151">
    <property type="entry name" value="TF_GreA/GreB_CS"/>
</dbReference>
<dbReference type="InterPro" id="IPR006359">
    <property type="entry name" value="Tscrpt_elong_fac_GreA"/>
</dbReference>
<dbReference type="InterPro" id="IPR028624">
    <property type="entry name" value="Tscrpt_elong_fac_GreA/B"/>
</dbReference>
<dbReference type="InterPro" id="IPR001437">
    <property type="entry name" value="Tscrpt_elong_fac_GreA/B_C"/>
</dbReference>
<dbReference type="InterPro" id="IPR023459">
    <property type="entry name" value="Tscrpt_elong_fac_GreA/B_fam"/>
</dbReference>
<dbReference type="InterPro" id="IPR022691">
    <property type="entry name" value="Tscrpt_elong_fac_GreA/B_N"/>
</dbReference>
<dbReference type="InterPro" id="IPR036805">
    <property type="entry name" value="Tscrpt_elong_fac_GreA/B_N_sf"/>
</dbReference>
<dbReference type="NCBIfam" id="TIGR01462">
    <property type="entry name" value="greA"/>
    <property type="match status" value="1"/>
</dbReference>
<dbReference type="NCBIfam" id="NF001261">
    <property type="entry name" value="PRK00226.1-2"/>
    <property type="match status" value="1"/>
</dbReference>
<dbReference type="NCBIfam" id="NF001263">
    <property type="entry name" value="PRK00226.1-4"/>
    <property type="match status" value="1"/>
</dbReference>
<dbReference type="NCBIfam" id="NF001264">
    <property type="entry name" value="PRK00226.1-5"/>
    <property type="match status" value="1"/>
</dbReference>
<dbReference type="PANTHER" id="PTHR30437">
    <property type="entry name" value="TRANSCRIPTION ELONGATION FACTOR GREA"/>
    <property type="match status" value="1"/>
</dbReference>
<dbReference type="PANTHER" id="PTHR30437:SF4">
    <property type="entry name" value="TRANSCRIPTION ELONGATION FACTOR GREA"/>
    <property type="match status" value="1"/>
</dbReference>
<dbReference type="Pfam" id="PF01272">
    <property type="entry name" value="GreA_GreB"/>
    <property type="match status" value="1"/>
</dbReference>
<dbReference type="Pfam" id="PF03449">
    <property type="entry name" value="GreA_GreB_N"/>
    <property type="match status" value="1"/>
</dbReference>
<dbReference type="PIRSF" id="PIRSF006092">
    <property type="entry name" value="GreA_GreB"/>
    <property type="match status" value="1"/>
</dbReference>
<dbReference type="SUPFAM" id="SSF54534">
    <property type="entry name" value="FKBP-like"/>
    <property type="match status" value="1"/>
</dbReference>
<dbReference type="SUPFAM" id="SSF46557">
    <property type="entry name" value="GreA transcript cleavage protein, N-terminal domain"/>
    <property type="match status" value="1"/>
</dbReference>
<dbReference type="PROSITE" id="PS00829">
    <property type="entry name" value="GREAB_1"/>
    <property type="match status" value="1"/>
</dbReference>
<dbReference type="PROSITE" id="PS00830">
    <property type="entry name" value="GREAB_2"/>
    <property type="match status" value="1"/>
</dbReference>
<sequence>MSKHPMTVEGAEALKEELHRLKFVDRPRIVEAIATARAHGDLKENAEYHAAREQQSFNEGRIQELEAKLSHAQIIDISKLPNNGKVIFGSTVTICHVATGSELTYKIVGEDEADIKLNKISYSSPIARALIGKELDDAVTVETPGGMVEYEIIQVQYIVE</sequence>